<comment type="catalytic activity">
    <reaction evidence="1">
        <text>tRNA(Gly) + glycine + ATP = glycyl-tRNA(Gly) + AMP + diphosphate</text>
        <dbReference type="Rhea" id="RHEA:16013"/>
        <dbReference type="Rhea" id="RHEA-COMP:9664"/>
        <dbReference type="Rhea" id="RHEA-COMP:9683"/>
        <dbReference type="ChEBI" id="CHEBI:30616"/>
        <dbReference type="ChEBI" id="CHEBI:33019"/>
        <dbReference type="ChEBI" id="CHEBI:57305"/>
        <dbReference type="ChEBI" id="CHEBI:78442"/>
        <dbReference type="ChEBI" id="CHEBI:78522"/>
        <dbReference type="ChEBI" id="CHEBI:456215"/>
        <dbReference type="EC" id="6.1.1.14"/>
    </reaction>
</comment>
<comment type="subunit">
    <text evidence="1">Tetramer of two alpha and two beta subunits.</text>
</comment>
<comment type="subcellular location">
    <subcellularLocation>
        <location evidence="1">Cytoplasm</location>
    </subcellularLocation>
</comment>
<comment type="similarity">
    <text evidence="1">Belongs to the class-II aminoacyl-tRNA synthetase family.</text>
</comment>
<gene>
    <name evidence="1" type="primary">glyS</name>
    <name type="ordered locus">RHOS4_04390</name>
    <name type="ORF">RSP_1858</name>
</gene>
<dbReference type="EC" id="6.1.1.14" evidence="1"/>
<dbReference type="EMBL" id="CP000143">
    <property type="protein sequence ID" value="ABA78007.1"/>
    <property type="molecule type" value="Genomic_DNA"/>
</dbReference>
<dbReference type="RefSeq" id="WP_011337035.1">
    <property type="nucleotide sequence ID" value="NZ_CP030271.1"/>
</dbReference>
<dbReference type="RefSeq" id="YP_351908.1">
    <property type="nucleotide sequence ID" value="NC_007493.2"/>
</dbReference>
<dbReference type="SMR" id="Q3J5C7"/>
<dbReference type="STRING" id="272943.RSP_1858"/>
<dbReference type="EnsemblBacteria" id="ABA78007">
    <property type="protein sequence ID" value="ABA78007"/>
    <property type="gene ID" value="RSP_1858"/>
</dbReference>
<dbReference type="KEGG" id="rsp:RSP_1858"/>
<dbReference type="PATRIC" id="fig|272943.9.peg.746"/>
<dbReference type="eggNOG" id="COG0751">
    <property type="taxonomic scope" value="Bacteria"/>
</dbReference>
<dbReference type="OrthoDB" id="9775440at2"/>
<dbReference type="PhylomeDB" id="Q3J5C7"/>
<dbReference type="Proteomes" id="UP000002703">
    <property type="component" value="Chromosome 1"/>
</dbReference>
<dbReference type="GO" id="GO:0005829">
    <property type="term" value="C:cytosol"/>
    <property type="evidence" value="ECO:0007669"/>
    <property type="project" value="TreeGrafter"/>
</dbReference>
<dbReference type="GO" id="GO:0004814">
    <property type="term" value="F:arginine-tRNA ligase activity"/>
    <property type="evidence" value="ECO:0007669"/>
    <property type="project" value="InterPro"/>
</dbReference>
<dbReference type="GO" id="GO:0005524">
    <property type="term" value="F:ATP binding"/>
    <property type="evidence" value="ECO:0007669"/>
    <property type="project" value="UniProtKB-UniRule"/>
</dbReference>
<dbReference type="GO" id="GO:0004820">
    <property type="term" value="F:glycine-tRNA ligase activity"/>
    <property type="evidence" value="ECO:0007669"/>
    <property type="project" value="UniProtKB-UniRule"/>
</dbReference>
<dbReference type="GO" id="GO:0006420">
    <property type="term" value="P:arginyl-tRNA aminoacylation"/>
    <property type="evidence" value="ECO:0007669"/>
    <property type="project" value="InterPro"/>
</dbReference>
<dbReference type="GO" id="GO:0006426">
    <property type="term" value="P:glycyl-tRNA aminoacylation"/>
    <property type="evidence" value="ECO:0007669"/>
    <property type="project" value="UniProtKB-UniRule"/>
</dbReference>
<dbReference type="HAMAP" id="MF_00255">
    <property type="entry name" value="Gly_tRNA_synth_beta"/>
    <property type="match status" value="1"/>
</dbReference>
<dbReference type="InterPro" id="IPR008909">
    <property type="entry name" value="DALR_anticod-bd"/>
</dbReference>
<dbReference type="InterPro" id="IPR015944">
    <property type="entry name" value="Gly-tRNA-synth_bsu"/>
</dbReference>
<dbReference type="InterPro" id="IPR006194">
    <property type="entry name" value="Gly-tRNA-synth_heterodimer"/>
</dbReference>
<dbReference type="NCBIfam" id="TIGR00211">
    <property type="entry name" value="glyS"/>
    <property type="match status" value="1"/>
</dbReference>
<dbReference type="PANTHER" id="PTHR30075:SF2">
    <property type="entry name" value="GLYCINE--TRNA LIGASE, CHLOROPLASTIC_MITOCHONDRIAL 2"/>
    <property type="match status" value="1"/>
</dbReference>
<dbReference type="PANTHER" id="PTHR30075">
    <property type="entry name" value="GLYCYL-TRNA SYNTHETASE"/>
    <property type="match status" value="1"/>
</dbReference>
<dbReference type="Pfam" id="PF05746">
    <property type="entry name" value="DALR_1"/>
    <property type="match status" value="1"/>
</dbReference>
<dbReference type="Pfam" id="PF02092">
    <property type="entry name" value="tRNA_synt_2f"/>
    <property type="match status" value="1"/>
</dbReference>
<dbReference type="PRINTS" id="PR01045">
    <property type="entry name" value="TRNASYNTHGB"/>
</dbReference>
<dbReference type="SUPFAM" id="SSF109604">
    <property type="entry name" value="HD-domain/PDEase-like"/>
    <property type="match status" value="1"/>
</dbReference>
<dbReference type="PROSITE" id="PS50861">
    <property type="entry name" value="AA_TRNA_LIGASE_II_GLYAB"/>
    <property type="match status" value="1"/>
</dbReference>
<reference key="1">
    <citation type="submission" date="2005-09" db="EMBL/GenBank/DDBJ databases">
        <title>Complete sequence of chromosome 1 of Rhodobacter sphaeroides 2.4.1.</title>
        <authorList>
            <person name="Copeland A."/>
            <person name="Lucas S."/>
            <person name="Lapidus A."/>
            <person name="Barry K."/>
            <person name="Detter J.C."/>
            <person name="Glavina T."/>
            <person name="Hammon N."/>
            <person name="Israni S."/>
            <person name="Pitluck S."/>
            <person name="Richardson P."/>
            <person name="Mackenzie C."/>
            <person name="Choudhary M."/>
            <person name="Larimer F."/>
            <person name="Hauser L.J."/>
            <person name="Land M."/>
            <person name="Donohue T.J."/>
            <person name="Kaplan S."/>
        </authorList>
    </citation>
    <scope>NUCLEOTIDE SEQUENCE [LARGE SCALE GENOMIC DNA]</scope>
    <source>
        <strain>ATCC 17023 / DSM 158 / JCM 6121 / CCUG 31486 / LMG 2827 / NBRC 12203 / NCIMB 8253 / ATH 2.4.1.</strain>
    </source>
</reference>
<name>SYGB_CERS4</name>
<accession>Q3J5C7</accession>
<organism>
    <name type="scientific">Cereibacter sphaeroides (strain ATCC 17023 / DSM 158 / JCM 6121 / CCUG 31486 / LMG 2827 / NBRC 12203 / NCIMB 8253 / ATH 2.4.1.)</name>
    <name type="common">Rhodobacter sphaeroides</name>
    <dbReference type="NCBI Taxonomy" id="272943"/>
    <lineage>
        <taxon>Bacteria</taxon>
        <taxon>Pseudomonadati</taxon>
        <taxon>Pseudomonadota</taxon>
        <taxon>Alphaproteobacteria</taxon>
        <taxon>Rhodobacterales</taxon>
        <taxon>Paracoccaceae</taxon>
        <taxon>Cereibacter</taxon>
    </lineage>
</organism>
<feature type="chain" id="PRO_1000101326" description="Glycine--tRNA ligase beta subunit">
    <location>
        <begin position="1"/>
        <end position="697"/>
    </location>
</feature>
<protein>
    <recommendedName>
        <fullName evidence="1">Glycine--tRNA ligase beta subunit</fullName>
        <ecNumber evidence="1">6.1.1.14</ecNumber>
    </recommendedName>
    <alternativeName>
        <fullName evidence="1">Glycyl-tRNA synthetase beta subunit</fullName>
        <shortName evidence="1">GlyRS</shortName>
    </alternativeName>
</protein>
<sequence length="697" mass="75591">MPDLLIELFSEEIPARMQARAREDLKKLVTDGLVEAGLTYASAGAFSTPRRLVLSVEGLSAESPTLREERKGPKADAPAAAIEGFLRSTGLTRDQLETREDKKGAVLFAVVEKPGRPAPEIVAEVLERTIRTFPWPKSMRWGTGSLRWVRPLQSILCLLSDEAGAEVVPMTLDGLTAGNSTEGHRFMAPARFAVSGFEDYRAKLARAFVMLDASEREQAIWHEATTQAFAQGLEVVPDAALLSEVAGLVEWPVVLMGAIGEDFLGLPPEVLQTSMREHQKFFSVTNPATGRIEKFVTVANRETADHGETILKGNGKVLSARLSDARFFWENDLRTVKTAGLEGMAEGLKQVTFHNRLGSQAARIARIEALAREIAPLVGASPDLAAEAARVAKADLQSAMVGEFPELQGTMGSYYARAAGLPEAVAQACKAHYQPLGPSDAVPTDPVSVAVALADKIDTLAGFWRIGEKPTGSKDPFALRRAALGVIRLLLTNNSRAGLMGIMLPAMNRHLEPFDTSDFTPYERDLLAFFHDRLKVHLREQGIRHDVIDACLAMPGNDDLTLLVKRAEALSAFLKTDDGTNLLQGFKRANNILTQAEAKDGVEYSFGADPKFAETDAERALFAALETAEAAIGPALQAEDFAAAMSAMAALRAPIDAFFETVQVNADNAVLRRNRLNMLHSIRATCARVADLTRIEG</sequence>
<proteinExistence type="inferred from homology"/>
<evidence type="ECO:0000255" key="1">
    <source>
        <dbReference type="HAMAP-Rule" id="MF_00255"/>
    </source>
</evidence>
<keyword id="KW-0030">Aminoacyl-tRNA synthetase</keyword>
<keyword id="KW-0067">ATP-binding</keyword>
<keyword id="KW-0963">Cytoplasm</keyword>
<keyword id="KW-0436">Ligase</keyword>
<keyword id="KW-0547">Nucleotide-binding</keyword>
<keyword id="KW-0648">Protein biosynthesis</keyword>
<keyword id="KW-1185">Reference proteome</keyword>